<reference key="1">
    <citation type="journal article" date="1997" name="DNA Res.">
        <title>Characterization of cDNA clones in size-fractionated cDNA libraries from human brain.</title>
        <authorList>
            <person name="Seki N."/>
            <person name="Ohira M."/>
            <person name="Nagase T."/>
            <person name="Ishikawa K."/>
            <person name="Miyajima N."/>
            <person name="Nakajima D."/>
            <person name="Nomura N."/>
            <person name="Ohara O."/>
        </authorList>
    </citation>
    <scope>NUCLEOTIDE SEQUENCE [LARGE SCALE MRNA] (ISOFORM 1)</scope>
    <source>
        <tissue>Brain</tissue>
    </source>
</reference>
<reference key="2">
    <citation type="journal article" date="2005" name="PLoS Med.">
        <title>Increased expression in dorsolateral prefrontal cortex of CAPON in schizophrenia and bipolar disorder.</title>
        <authorList>
            <person name="Xu B."/>
            <person name="Wratten N."/>
            <person name="Charych E.I."/>
            <person name="Buyske S."/>
            <person name="Firestein B.L."/>
            <person name="Brzustowicz L.M."/>
        </authorList>
    </citation>
    <scope>NUCLEOTIDE SEQUENCE [MRNA] (ISOFORM 2)</scope>
    <scope>ALTERNATIVE SPLICING</scope>
</reference>
<reference key="3">
    <citation type="journal article" date="2006" name="Nature">
        <title>The DNA sequence and biological annotation of human chromosome 1.</title>
        <authorList>
            <person name="Gregory S.G."/>
            <person name="Barlow K.F."/>
            <person name="McLay K.E."/>
            <person name="Kaul R."/>
            <person name="Swarbreck D."/>
            <person name="Dunham A."/>
            <person name="Scott C.E."/>
            <person name="Howe K.L."/>
            <person name="Woodfine K."/>
            <person name="Spencer C.C.A."/>
            <person name="Jones M.C."/>
            <person name="Gillson C."/>
            <person name="Searle S."/>
            <person name="Zhou Y."/>
            <person name="Kokocinski F."/>
            <person name="McDonald L."/>
            <person name="Evans R."/>
            <person name="Phillips K."/>
            <person name="Atkinson A."/>
            <person name="Cooper R."/>
            <person name="Jones C."/>
            <person name="Hall R.E."/>
            <person name="Andrews T.D."/>
            <person name="Lloyd C."/>
            <person name="Ainscough R."/>
            <person name="Almeida J.P."/>
            <person name="Ambrose K.D."/>
            <person name="Anderson F."/>
            <person name="Andrew R.W."/>
            <person name="Ashwell R.I.S."/>
            <person name="Aubin K."/>
            <person name="Babbage A.K."/>
            <person name="Bagguley C.L."/>
            <person name="Bailey J."/>
            <person name="Beasley H."/>
            <person name="Bethel G."/>
            <person name="Bird C.P."/>
            <person name="Bray-Allen S."/>
            <person name="Brown J.Y."/>
            <person name="Brown A.J."/>
            <person name="Buckley D."/>
            <person name="Burton J."/>
            <person name="Bye J."/>
            <person name="Carder C."/>
            <person name="Chapman J.C."/>
            <person name="Clark S.Y."/>
            <person name="Clarke G."/>
            <person name="Clee C."/>
            <person name="Cobley V."/>
            <person name="Collier R.E."/>
            <person name="Corby N."/>
            <person name="Coville G.J."/>
            <person name="Davies J."/>
            <person name="Deadman R."/>
            <person name="Dunn M."/>
            <person name="Earthrowl M."/>
            <person name="Ellington A.G."/>
            <person name="Errington H."/>
            <person name="Frankish A."/>
            <person name="Frankland J."/>
            <person name="French L."/>
            <person name="Garner P."/>
            <person name="Garnett J."/>
            <person name="Gay L."/>
            <person name="Ghori M.R.J."/>
            <person name="Gibson R."/>
            <person name="Gilby L.M."/>
            <person name="Gillett W."/>
            <person name="Glithero R.J."/>
            <person name="Grafham D.V."/>
            <person name="Griffiths C."/>
            <person name="Griffiths-Jones S."/>
            <person name="Grocock R."/>
            <person name="Hammond S."/>
            <person name="Harrison E.S.I."/>
            <person name="Hart E."/>
            <person name="Haugen E."/>
            <person name="Heath P.D."/>
            <person name="Holmes S."/>
            <person name="Holt K."/>
            <person name="Howden P.J."/>
            <person name="Hunt A.R."/>
            <person name="Hunt S.E."/>
            <person name="Hunter G."/>
            <person name="Isherwood J."/>
            <person name="James R."/>
            <person name="Johnson C."/>
            <person name="Johnson D."/>
            <person name="Joy A."/>
            <person name="Kay M."/>
            <person name="Kershaw J.K."/>
            <person name="Kibukawa M."/>
            <person name="Kimberley A.M."/>
            <person name="King A."/>
            <person name="Knights A.J."/>
            <person name="Lad H."/>
            <person name="Laird G."/>
            <person name="Lawlor S."/>
            <person name="Leongamornlert D.A."/>
            <person name="Lloyd D.M."/>
            <person name="Loveland J."/>
            <person name="Lovell J."/>
            <person name="Lush M.J."/>
            <person name="Lyne R."/>
            <person name="Martin S."/>
            <person name="Mashreghi-Mohammadi M."/>
            <person name="Matthews L."/>
            <person name="Matthews N.S.W."/>
            <person name="McLaren S."/>
            <person name="Milne S."/>
            <person name="Mistry S."/>
            <person name="Moore M.J.F."/>
            <person name="Nickerson T."/>
            <person name="O'Dell C.N."/>
            <person name="Oliver K."/>
            <person name="Palmeiri A."/>
            <person name="Palmer S.A."/>
            <person name="Parker A."/>
            <person name="Patel D."/>
            <person name="Pearce A.V."/>
            <person name="Peck A.I."/>
            <person name="Pelan S."/>
            <person name="Phelps K."/>
            <person name="Phillimore B.J."/>
            <person name="Plumb R."/>
            <person name="Rajan J."/>
            <person name="Raymond C."/>
            <person name="Rouse G."/>
            <person name="Saenphimmachak C."/>
            <person name="Sehra H.K."/>
            <person name="Sheridan E."/>
            <person name="Shownkeen R."/>
            <person name="Sims S."/>
            <person name="Skuce C.D."/>
            <person name="Smith M."/>
            <person name="Steward C."/>
            <person name="Subramanian S."/>
            <person name="Sycamore N."/>
            <person name="Tracey A."/>
            <person name="Tromans A."/>
            <person name="Van Helmond Z."/>
            <person name="Wall M."/>
            <person name="Wallis J.M."/>
            <person name="White S."/>
            <person name="Whitehead S.L."/>
            <person name="Wilkinson J.E."/>
            <person name="Willey D.L."/>
            <person name="Williams H."/>
            <person name="Wilming L."/>
            <person name="Wray P.W."/>
            <person name="Wu Z."/>
            <person name="Coulson A."/>
            <person name="Vaudin M."/>
            <person name="Sulston J.E."/>
            <person name="Durbin R.M."/>
            <person name="Hubbard T."/>
            <person name="Wooster R."/>
            <person name="Dunham I."/>
            <person name="Carter N.P."/>
            <person name="McVean G."/>
            <person name="Ross M.T."/>
            <person name="Harrow J."/>
            <person name="Olson M.V."/>
            <person name="Beck S."/>
            <person name="Rogers J."/>
            <person name="Bentley D.R."/>
        </authorList>
    </citation>
    <scope>NUCLEOTIDE SEQUENCE [LARGE SCALE GENOMIC DNA]</scope>
</reference>
<reference key="4">
    <citation type="journal article" date="2004" name="Genome Res.">
        <title>The status, quality, and expansion of the NIH full-length cDNA project: the Mammalian Gene Collection (MGC).</title>
        <authorList>
            <consortium name="The MGC Project Team"/>
        </authorList>
    </citation>
    <scope>NUCLEOTIDE SEQUENCE [LARGE SCALE MRNA] (ISOFORMS 1 AND 3)</scope>
    <source>
        <tissue>Brain</tissue>
    </source>
</reference>
<reference key="5">
    <citation type="journal article" date="1998" name="Neuron">
        <title>CAPON: a protein associated with neuronal nitric oxide synthase that regulates its interactions with PSD95.</title>
        <authorList>
            <person name="Jaffrey S.R."/>
            <person name="Snowman A.M."/>
            <person name="Eliasson M.J.L."/>
            <person name="Cohen N.A."/>
            <person name="Snyder S.H."/>
        </authorList>
    </citation>
    <scope>NUCLEOTIDE SEQUENCE [MRNA] OF 354-506 (ISOFORM 1)</scope>
    <scope>INTERACTION WITH NOS1</scope>
</reference>
<reference key="6">
    <citation type="journal article" date="2006" name="Nat. Genet.">
        <title>A common genetic variant in the NOS1 regulator NOS1AP modulates cardiac repolarization.</title>
        <authorList>
            <person name="Arking D.E."/>
            <person name="Pfeufer A."/>
            <person name="Post W."/>
            <person name="Kao W.H.L."/>
            <person name="Newton-Cheh C."/>
            <person name="Ikeda M."/>
            <person name="West K."/>
            <person name="Kashuk C."/>
            <person name="Akyol M."/>
            <person name="Perz S."/>
            <person name="Jalilzadeh S."/>
            <person name="Illig T."/>
            <person name="Gieger C."/>
            <person name="Guo C.-Y."/>
            <person name="Larson M.G."/>
            <person name="Wichmann H.E."/>
            <person name="Marban E."/>
            <person name="O'Donnell C.J."/>
            <person name="Hirschhorn J.N."/>
            <person name="Kaeaeb S."/>
            <person name="Spooner P.M."/>
            <person name="Meitinger T."/>
            <person name="Chakravarti A."/>
        </authorList>
    </citation>
    <scope>INVOLVEMENT IN THE REGULATION OF QT INTERVALS</scope>
    <scope>POLYMORPHISM</scope>
</reference>
<reference key="7">
    <citation type="journal article" date="2008" name="J. Proteome Res.">
        <title>Combining protein-based IMAC, peptide-based IMAC, and MudPIT for efficient phosphoproteomic analysis.</title>
        <authorList>
            <person name="Cantin G.T."/>
            <person name="Yi W."/>
            <person name="Lu B."/>
            <person name="Park S.K."/>
            <person name="Xu T."/>
            <person name="Lee J.-D."/>
            <person name="Yates J.R. III"/>
        </authorList>
    </citation>
    <scope>IDENTIFICATION BY MASS SPECTROMETRY [LARGE SCALE ANALYSIS]</scope>
    <source>
        <tissue>Cervix carcinoma</tissue>
    </source>
</reference>
<reference key="8">
    <citation type="journal article" date="2008" name="Mol. Cell">
        <title>Kinase-selective enrichment enables quantitative phosphoproteomics of the kinome across the cell cycle.</title>
        <authorList>
            <person name="Daub H."/>
            <person name="Olsen J.V."/>
            <person name="Bairlein M."/>
            <person name="Gnad F."/>
            <person name="Oppermann F.S."/>
            <person name="Korner R."/>
            <person name="Greff Z."/>
            <person name="Keri G."/>
            <person name="Stemmann O."/>
            <person name="Mann M."/>
        </authorList>
    </citation>
    <scope>IDENTIFICATION BY MASS SPECTROMETRY [LARGE SCALE ANALYSIS]</scope>
    <source>
        <tissue>Cervix carcinoma</tissue>
    </source>
</reference>
<reference key="9">
    <citation type="journal article" date="2008" name="Proc. Natl. Acad. Sci. U.S.A.">
        <title>A quantitative atlas of mitotic phosphorylation.</title>
        <authorList>
            <person name="Dephoure N."/>
            <person name="Zhou C."/>
            <person name="Villen J."/>
            <person name="Beausoleil S.A."/>
            <person name="Bakalarski C.E."/>
            <person name="Elledge S.J."/>
            <person name="Gygi S.P."/>
        </authorList>
    </citation>
    <scope>IDENTIFICATION BY MASS SPECTROMETRY [LARGE SCALE ANALYSIS]</scope>
    <source>
        <tissue>Cervix carcinoma</tissue>
    </source>
</reference>
<reference key="10">
    <citation type="journal article" date="2010" name="Sci. Signal.">
        <title>Quantitative phosphoproteomics reveals widespread full phosphorylation site occupancy during mitosis.</title>
        <authorList>
            <person name="Olsen J.V."/>
            <person name="Vermeulen M."/>
            <person name="Santamaria A."/>
            <person name="Kumar C."/>
            <person name="Miller M.L."/>
            <person name="Jensen L.J."/>
            <person name="Gnad F."/>
            <person name="Cox J."/>
            <person name="Jensen T.S."/>
            <person name="Nigg E.A."/>
            <person name="Brunak S."/>
            <person name="Mann M."/>
        </authorList>
    </citation>
    <scope>PHOSPHORYLATION [LARGE SCALE ANALYSIS] AT SER-266</scope>
    <scope>IDENTIFICATION BY MASS SPECTROMETRY [LARGE SCALE ANALYSIS]</scope>
    <source>
        <tissue>Cervix carcinoma</tissue>
    </source>
</reference>
<reference key="11">
    <citation type="journal article" date="2013" name="J. Proteome Res.">
        <title>Toward a comprehensive characterization of a human cancer cell phosphoproteome.</title>
        <authorList>
            <person name="Zhou H."/>
            <person name="Di Palma S."/>
            <person name="Preisinger C."/>
            <person name="Peng M."/>
            <person name="Polat A.N."/>
            <person name="Heck A.J."/>
            <person name="Mohammed S."/>
        </authorList>
    </citation>
    <scope>PHOSPHORYLATION [LARGE SCALE ANALYSIS] AT SER-266</scope>
    <scope>IDENTIFICATION BY MASS SPECTROMETRY [LARGE SCALE ANALYSIS]</scope>
    <source>
        <tissue>Cervix carcinoma</tissue>
        <tissue>Erythroleukemia</tissue>
    </source>
</reference>
<reference key="12">
    <citation type="journal article" date="2014" name="J. Proteomics">
        <title>An enzyme assisted RP-RPLC approach for in-depth analysis of human liver phosphoproteome.</title>
        <authorList>
            <person name="Bian Y."/>
            <person name="Song C."/>
            <person name="Cheng K."/>
            <person name="Dong M."/>
            <person name="Wang F."/>
            <person name="Huang J."/>
            <person name="Sun D."/>
            <person name="Wang L."/>
            <person name="Ye M."/>
            <person name="Zou H."/>
        </authorList>
    </citation>
    <scope>IDENTIFICATION BY MASS SPECTROMETRY [LARGE SCALE ANALYSIS]</scope>
    <source>
        <tissue>Liver</tissue>
    </source>
</reference>
<reference key="13">
    <citation type="journal article" date="2021" name="Sci. Adv.">
        <title>Recessive NOS1AP variants impair actin remodeling and cause glomerulopathy in humans and mice.</title>
        <authorList>
            <person name="Majmundar A.J."/>
            <person name="Buerger F."/>
            <person name="Forbes T.A."/>
            <person name="Klaembt V."/>
            <person name="Schneider R."/>
            <person name="Deutsch K."/>
            <person name="Kitzler T.M."/>
            <person name="Howden S.E."/>
            <person name="Scurr M."/>
            <person name="Tan K.S."/>
            <person name="Krzeminski M."/>
            <person name="Widmeier E."/>
            <person name="Braun D.A."/>
            <person name="Lai E."/>
            <person name="Ullah I."/>
            <person name="Amar A."/>
            <person name="Kolb A."/>
            <person name="Eddy K."/>
            <person name="Chen C.H."/>
            <person name="Salmanullah D."/>
            <person name="Dai R."/>
            <person name="Nakayama M."/>
            <person name="Ottlewski I."/>
            <person name="Kolvenbach C.M."/>
            <person name="Onuchic-Whitford A.C."/>
            <person name="Mao Y."/>
            <person name="Mann N."/>
            <person name="Nabhan M.M."/>
            <person name="Rosen S."/>
            <person name="Forman-Kay J.D."/>
            <person name="Soliman N.A."/>
            <person name="Heilos A."/>
            <person name="Kain R."/>
            <person name="Aufricht C."/>
            <person name="Mane S."/>
            <person name="Lifton R.P."/>
            <person name="Shril S."/>
            <person name="Little M.H."/>
            <person name="Hildebrandt F."/>
        </authorList>
    </citation>
    <scope>VARIANT NPHS22 TYR-143</scope>
    <scope>TISSUE SPECIFICITY</scope>
    <scope>CHARACTERIZATION OF VARIANT NPHS22 TYR-143</scope>
    <scope>FUNCTION</scope>
</reference>
<name>CAPON_HUMAN</name>
<feature type="chain" id="PRO_0000089316" description="Carboxyl-terminal PDZ ligand of neuronal nitric oxide synthase protein">
    <location>
        <begin position="1"/>
        <end position="506"/>
    </location>
</feature>
<feature type="domain" description="PID" evidence="5">
    <location>
        <begin position="26"/>
        <end position="196"/>
    </location>
</feature>
<feature type="region of interest" description="Disordered" evidence="6">
    <location>
        <begin position="175"/>
        <end position="224"/>
    </location>
</feature>
<feature type="region of interest" description="Disordered" evidence="6">
    <location>
        <begin position="241"/>
        <end position="260"/>
    </location>
</feature>
<feature type="region of interest" description="Interaction with NOS1" evidence="1">
    <location>
        <begin position="494"/>
        <end position="506"/>
    </location>
</feature>
<feature type="coiled-coil region" evidence="4">
    <location>
        <begin position="322"/>
        <end position="363"/>
    </location>
</feature>
<feature type="short sequence motif" description="PDZ-binding" evidence="1">
    <location>
        <begin position="504"/>
        <end position="506"/>
    </location>
</feature>
<feature type="compositionally biased region" description="Low complexity" evidence="6">
    <location>
        <begin position="203"/>
        <end position="213"/>
    </location>
</feature>
<feature type="modified residue" description="Phosphoserine" evidence="3">
    <location>
        <position position="188"/>
    </location>
</feature>
<feature type="modified residue" description="Phosphoserine" evidence="3">
    <location>
        <position position="192"/>
    </location>
</feature>
<feature type="modified residue" description="Phosphoserine" evidence="3">
    <location>
        <position position="195"/>
    </location>
</feature>
<feature type="modified residue" description="Phosphoserine" evidence="13 14">
    <location>
        <position position="266"/>
    </location>
</feature>
<feature type="modified residue" description="Phosphoserine" evidence="3">
    <location>
        <position position="371"/>
    </location>
</feature>
<feature type="modified residue" description="Phosphoserine" evidence="3">
    <location>
        <position position="374"/>
    </location>
</feature>
<feature type="modified residue" description="Phosphoserine" evidence="3">
    <location>
        <position position="401"/>
    </location>
</feature>
<feature type="modified residue" description="Phosphoserine" evidence="3">
    <location>
        <position position="417"/>
    </location>
</feature>
<feature type="splice variant" id="VSP_042751" description="In isoform 2." evidence="10">
    <original>MPSKTKYNLVDDGHDLR</original>
    <variation>MSLSSLCPVFSAAASSL</variation>
    <location>
        <begin position="1"/>
        <end position="17"/>
    </location>
</feature>
<feature type="splice variant" id="VSP_042752" description="In isoform 2." evidence="10">
    <location>
        <begin position="18"/>
        <end position="312"/>
    </location>
</feature>
<feature type="splice variant" id="VSP_043350" description="In isoform 3." evidence="9">
    <location>
        <begin position="91"/>
        <end position="95"/>
    </location>
</feature>
<feature type="sequence variant" id="VAR_085238" description="In NPHS22; loss of promotion of filipodia and podosome formation and migration; dbSNP:rs1656826074." evidence="8">
    <original>C</original>
    <variation>Y</variation>
    <location>
        <position position="143"/>
    </location>
</feature>
<accession>O75052</accession>
<accession>B7ZLF5</accession>
<accession>O43564</accession>
<accession>Q3T551</accession>
<accession>Q5VU95</accession>
<gene>
    <name evidence="12" type="primary">NOS1AP</name>
    <name type="synonym">CAPON</name>
    <name type="synonym">KIAA0464</name>
</gene>
<keyword id="KW-0025">Alternative splicing</keyword>
<keyword id="KW-0965">Cell junction</keyword>
<keyword id="KW-0966">Cell projection</keyword>
<keyword id="KW-0175">Coiled coil</keyword>
<keyword id="KW-0225">Disease variant</keyword>
<keyword id="KW-0597">Phosphoprotein</keyword>
<keyword id="KW-1267">Proteomics identification</keyword>
<keyword id="KW-1185">Reference proteome</keyword>
<organism>
    <name type="scientific">Homo sapiens</name>
    <name type="common">Human</name>
    <dbReference type="NCBI Taxonomy" id="9606"/>
    <lineage>
        <taxon>Eukaryota</taxon>
        <taxon>Metazoa</taxon>
        <taxon>Chordata</taxon>
        <taxon>Craniata</taxon>
        <taxon>Vertebrata</taxon>
        <taxon>Euteleostomi</taxon>
        <taxon>Mammalia</taxon>
        <taxon>Eutheria</taxon>
        <taxon>Euarchontoglires</taxon>
        <taxon>Primates</taxon>
        <taxon>Haplorrhini</taxon>
        <taxon>Catarrhini</taxon>
        <taxon>Hominidae</taxon>
        <taxon>Homo</taxon>
    </lineage>
</organism>
<proteinExistence type="evidence at protein level"/>
<protein>
    <recommendedName>
        <fullName evidence="11">Carboxyl-terminal PDZ ligand of neuronal nitric oxide synthase protein</fullName>
    </recommendedName>
    <alternativeName>
        <fullName>C-terminal PDZ ligand of neuronal nitric oxide synthase protein</fullName>
    </alternativeName>
    <alternativeName>
        <fullName>Nitric oxide synthase 1 adaptor protein</fullName>
    </alternativeName>
</protein>
<comment type="function">
    <text evidence="2 8">Adapter protein involved in neuronal nitric-oxide (NO) synthesis regulation via its association with nNOS/NOS1. The complex formed with NOS1 and synapsins is necessary for specific NO and synapsin functions at a presynaptic level. Mediates an indirect interaction between NOS1 and RASD1 leading to enhance the ability of NOS1 to activate RASD1. Competes with DLG4 for interaction with NOS1, possibly affecting NOS1 activity by regulating the interaction between NOS1 and DLG4 (By similarity). In kidney podocytes, plays a role in podosomes and filopodia formation through CDC42 activation (PubMed:33523862).</text>
</comment>
<comment type="subunit">
    <text evidence="2">Interacts with the PDZ domain of NOS1 or the second PDZ domain of DLG4 through its C-terminus. Interacts with RASD1 and SYN1, SYN2 and SYN3 via its PID domain. Forms a ternary complex with NOS1 and RASD1. Forms a ternary complex with NOS1 and SYN1.</text>
</comment>
<comment type="interaction">
    <interactant intactId="EBI-780467">
        <id>O75052</id>
    </interactant>
    <interactant intactId="EBI-10268158">
        <id>Q8N9E0</id>
        <label>FAM133A</label>
    </interactant>
    <organismsDiffer>false</organismsDiffer>
    <experiments>5</experiments>
</comment>
<comment type="interaction">
    <interactant intactId="EBI-780467">
        <id>O75052</id>
    </interactant>
    <interactant intactId="EBI-721539">
        <id>Q8N5F7</id>
        <label>NKAP</label>
    </interactant>
    <organismsDiffer>false</organismsDiffer>
    <experiments>5</experiments>
</comment>
<comment type="interaction">
    <interactant intactId="EBI-780467">
        <id>O75052</id>
    </interactant>
    <interactant intactId="EBI-3650647">
        <id>Q9BUZ4</id>
        <label>TRAF4</label>
    </interactant>
    <organismsDiffer>false</organismsDiffer>
    <experiments>3</experiments>
</comment>
<comment type="subcellular location">
    <subcellularLocation>
        <location evidence="2">Cell projection</location>
        <location evidence="2">Filopodium</location>
    </subcellularLocation>
    <subcellularLocation>
        <location evidence="2">Cell projection</location>
        <location evidence="2">Podosome</location>
    </subcellularLocation>
</comment>
<comment type="alternative products">
    <event type="alternative splicing"/>
    <isoform>
        <id>O75052-1</id>
        <name>1</name>
        <sequence type="displayed"/>
    </isoform>
    <isoform>
        <id>O75052-2</id>
        <name>2</name>
        <sequence type="described" ref="VSP_042751 VSP_042752"/>
    </isoform>
    <isoform>
        <id>O75052-3</id>
        <name>3</name>
        <sequence type="described" ref="VSP_043350"/>
    </isoform>
</comment>
<comment type="tissue specificity">
    <text evidence="8">Expressed in kidney glomeruli podocytes.</text>
</comment>
<comment type="polymorphism">
    <text evidence="7">Genetic variation in NOS1AP influences the electrocardiographic QT interval [MIM:610141]. The QT interval is defined as the time from the beginning of the Q wave to the end of the T wave, representing the duration of ventricular electrical activity. The QT interval, a measure of cardiac repolarization, is a genetically influenced quantitative trait with considerable medical relevance: both high and low values are associated with increased risk of cardiovascular morbidity and mortality.</text>
</comment>
<comment type="disease" evidence="8">
    <disease id="DI-06009">
        <name>Nephrotic syndrome 22</name>
        <acronym>NPHS22</acronym>
        <description>A form of nephrotic syndrome, a renal disease clinically characterized by severe proteinuria, resulting in complications such as hypoalbuminemia, hyperlipidemia and edema. Kidney biopsies show non-specific histologic changes such as focal segmental glomerulosclerosis and diffuse mesangial proliferation. Some affected individuals have an inherited steroid-resistant form that progresses to end-stage renal failure. NPHS22 is an autosomal recessive, steroid-resistant form characterized by onset of progressive kidney dysfunction in infancy.</description>
        <dbReference type="MIM" id="619155"/>
    </disease>
    <text>The disease is caused by variants affecting the gene represented in this entry.</text>
</comment>
<comment type="sequence caution" evidence="11">
    <conflict type="erroneous initiation">
        <sequence resource="EMBL-CDS" id="BAA32309"/>
    </conflict>
    <text>Extended N-terminus.</text>
</comment>
<sequence>MPSKTKYNLVDDGHDLRIPLHNEDAFQHGICFEAKYVGSLDVPRPNSRVEIVAAMRRIRYEFKAKNIKKKKVSIMVSVDGVKVILKKKKKLLLLQKKEWTWDESKMLVMQDPIYRIFYVSHDSQDLKIFSYIARDGASNIFRCNVFKSKKKSQAMRIVRTVGQAFEVCHKLSLQHTQQNADGQEDGESERNSNSSGDPGRQLTGAERASTATAEETDIDAVEVPLPGNDVLEFSRGVTDLDAVGKEGGSHTGSKVSHPQEPMLTASPRMLLPSSSSKPPGLGTETPLSTHHQMQLLQQLLQQQQQQTQVAVAQVHLLKDQLAAEAAARLEAQARVHQLLLQNKDMLQHISLLVKQVQELELKLSGQNAMGSQDSLLEITFRSGALPVLCDPTTPKPEDLHSPPLGAGLADFAHPAGSPLGRRDCLVKLECFRFLPPEDTPPPAQGEALLGGLELIKFRESGIASEYESNTDESEERDSWSQEELPRLLNVLQRQELGDGLDDEIAV</sequence>
<dbReference type="EMBL" id="AB007933">
    <property type="protein sequence ID" value="BAA32309.2"/>
    <property type="status" value="ALT_INIT"/>
    <property type="molecule type" value="mRNA"/>
</dbReference>
<dbReference type="EMBL" id="AY841899">
    <property type="protein sequence ID" value="AAW57298.1"/>
    <property type="molecule type" value="mRNA"/>
</dbReference>
<dbReference type="EMBL" id="AL590408">
    <property type="status" value="NOT_ANNOTATED_CDS"/>
    <property type="molecule type" value="Genomic_DNA"/>
</dbReference>
<dbReference type="EMBL" id="AL450163">
    <property type="status" value="NOT_ANNOTATED_CDS"/>
    <property type="molecule type" value="Genomic_DNA"/>
</dbReference>
<dbReference type="EMBL" id="AL512785">
    <property type="status" value="NOT_ANNOTATED_CDS"/>
    <property type="molecule type" value="Genomic_DNA"/>
</dbReference>
<dbReference type="EMBL" id="BC112295">
    <property type="protein sequence ID" value="AAI12296.1"/>
    <property type="molecule type" value="mRNA"/>
</dbReference>
<dbReference type="EMBL" id="BC143771">
    <property type="protein sequence ID" value="AAI43772.1"/>
    <property type="molecule type" value="mRNA"/>
</dbReference>
<dbReference type="EMBL" id="AF037070">
    <property type="protein sequence ID" value="AAC39656.1"/>
    <property type="molecule type" value="mRNA"/>
</dbReference>
<dbReference type="CCDS" id="CCDS1237.1">
    <molecule id="O75052-1"/>
</dbReference>
<dbReference type="CCDS" id="CCDS44267.1">
    <molecule id="O75052-2"/>
</dbReference>
<dbReference type="CCDS" id="CCDS53421.1">
    <molecule id="O75052-3"/>
</dbReference>
<dbReference type="RefSeq" id="NP_001119532.2">
    <molecule id="O75052-2"/>
    <property type="nucleotide sequence ID" value="NM_001126060.2"/>
</dbReference>
<dbReference type="RefSeq" id="NP_001158229.1">
    <molecule id="O75052-3"/>
    <property type="nucleotide sequence ID" value="NM_001164757.2"/>
</dbReference>
<dbReference type="RefSeq" id="NP_055512.1">
    <molecule id="O75052-1"/>
    <property type="nucleotide sequence ID" value="NM_014697.3"/>
</dbReference>
<dbReference type="SMR" id="O75052"/>
<dbReference type="BioGRID" id="115071">
    <property type="interactions" value="181"/>
</dbReference>
<dbReference type="CORUM" id="O75052"/>
<dbReference type="FunCoup" id="O75052">
    <property type="interactions" value="1526"/>
</dbReference>
<dbReference type="IntAct" id="O75052">
    <property type="interactions" value="71"/>
</dbReference>
<dbReference type="MINT" id="O75052"/>
<dbReference type="STRING" id="9606.ENSP00000355133"/>
<dbReference type="GlyGen" id="O75052">
    <property type="glycosylation" value="1 site, 1 O-linked glycan (1 site)"/>
</dbReference>
<dbReference type="iPTMnet" id="O75052"/>
<dbReference type="PhosphoSitePlus" id="O75052"/>
<dbReference type="BioMuta" id="NOS1AP"/>
<dbReference type="jPOST" id="O75052"/>
<dbReference type="MassIVE" id="O75052"/>
<dbReference type="PaxDb" id="9606-ENSP00000355133"/>
<dbReference type="PeptideAtlas" id="O75052"/>
<dbReference type="ProteomicsDB" id="49725">
    <molecule id="O75052-1"/>
</dbReference>
<dbReference type="ProteomicsDB" id="49726">
    <molecule id="O75052-2"/>
</dbReference>
<dbReference type="ProteomicsDB" id="49727">
    <molecule id="O75052-3"/>
</dbReference>
<dbReference type="Pumba" id="O75052"/>
<dbReference type="Antibodypedia" id="4346">
    <property type="antibodies" value="244 antibodies from 28 providers"/>
</dbReference>
<dbReference type="DNASU" id="9722"/>
<dbReference type="Ensembl" id="ENST00000361897.10">
    <molecule id="O75052-1"/>
    <property type="protein sequence ID" value="ENSP00000355133.5"/>
    <property type="gene ID" value="ENSG00000198929.13"/>
</dbReference>
<dbReference type="Ensembl" id="ENST00000493151.1">
    <molecule id="O75052-2"/>
    <property type="protein sequence ID" value="ENSP00000434988.1"/>
    <property type="gene ID" value="ENSG00000198929.13"/>
</dbReference>
<dbReference type="Ensembl" id="ENST00000530878.5">
    <molecule id="O75052-3"/>
    <property type="protein sequence ID" value="ENSP00000431586.1"/>
    <property type="gene ID" value="ENSG00000198929.13"/>
</dbReference>
<dbReference type="GeneID" id="9722"/>
<dbReference type="KEGG" id="hsa:9722"/>
<dbReference type="MANE-Select" id="ENST00000361897.10">
    <property type="protein sequence ID" value="ENSP00000355133.5"/>
    <property type="RefSeq nucleotide sequence ID" value="NM_014697.3"/>
    <property type="RefSeq protein sequence ID" value="NP_055512.1"/>
</dbReference>
<dbReference type="UCSC" id="uc001gbv.3">
    <molecule id="O75052-1"/>
    <property type="organism name" value="human"/>
</dbReference>
<dbReference type="AGR" id="HGNC:16859"/>
<dbReference type="CTD" id="9722"/>
<dbReference type="DisGeNET" id="9722"/>
<dbReference type="GeneCards" id="NOS1AP"/>
<dbReference type="HGNC" id="HGNC:16859">
    <property type="gene designation" value="NOS1AP"/>
</dbReference>
<dbReference type="HPA" id="ENSG00000198929">
    <property type="expression patterns" value="Tissue enriched (brain)"/>
</dbReference>
<dbReference type="MalaCards" id="NOS1AP"/>
<dbReference type="MIM" id="605551">
    <property type="type" value="gene"/>
</dbReference>
<dbReference type="MIM" id="610141">
    <property type="type" value="phenotype"/>
</dbReference>
<dbReference type="MIM" id="619155">
    <property type="type" value="phenotype"/>
</dbReference>
<dbReference type="neXtProt" id="NX_O75052"/>
<dbReference type="OpenTargets" id="ENSG00000198929"/>
<dbReference type="Orphanet" id="101016">
    <property type="disease" value="Romano-Ward syndrome"/>
</dbReference>
<dbReference type="PharmGKB" id="PA142671259"/>
<dbReference type="VEuPathDB" id="HostDB:ENSG00000198929"/>
<dbReference type="eggNOG" id="KOG4458">
    <property type="taxonomic scope" value="Eukaryota"/>
</dbReference>
<dbReference type="eggNOG" id="KOG4815">
    <property type="taxonomic scope" value="Eukaryota"/>
</dbReference>
<dbReference type="GeneTree" id="ENSGT00510000046975"/>
<dbReference type="HOGENOM" id="CLU_040178_1_0_1"/>
<dbReference type="InParanoid" id="O75052"/>
<dbReference type="OMA" id="QNTMGSQ"/>
<dbReference type="OrthoDB" id="10030336at2759"/>
<dbReference type="PAN-GO" id="O75052">
    <property type="GO annotations" value="1 GO annotation based on evolutionary models"/>
</dbReference>
<dbReference type="PhylomeDB" id="O75052"/>
<dbReference type="TreeFam" id="TF317226"/>
<dbReference type="PathwayCommons" id="O75052"/>
<dbReference type="SignaLink" id="O75052"/>
<dbReference type="BioGRID-ORCS" id="9722">
    <property type="hits" value="215 hits in 1152 CRISPR screens"/>
</dbReference>
<dbReference type="ChiTaRS" id="NOS1AP">
    <property type="organism name" value="human"/>
</dbReference>
<dbReference type="GeneWiki" id="NOS1AP"/>
<dbReference type="GenomeRNAi" id="9722"/>
<dbReference type="Pharos" id="O75052">
    <property type="development level" value="Tbio"/>
</dbReference>
<dbReference type="PRO" id="PR:O75052"/>
<dbReference type="Proteomes" id="UP000005640">
    <property type="component" value="Chromosome 1"/>
</dbReference>
<dbReference type="RNAct" id="O75052">
    <property type="molecule type" value="protein"/>
</dbReference>
<dbReference type="Bgee" id="ENSG00000198929">
    <property type="expression patterns" value="Expressed in CA1 field of hippocampus and 155 other cell types or tissues"/>
</dbReference>
<dbReference type="ExpressionAtlas" id="O75052">
    <property type="expression patterns" value="baseline and differential"/>
</dbReference>
<dbReference type="GO" id="GO:0070161">
    <property type="term" value="C:anchoring junction"/>
    <property type="evidence" value="ECO:0007669"/>
    <property type="project" value="UniProtKB-KW"/>
</dbReference>
<dbReference type="GO" id="GO:0005901">
    <property type="term" value="C:caveola"/>
    <property type="evidence" value="ECO:0007669"/>
    <property type="project" value="Ensembl"/>
</dbReference>
<dbReference type="GO" id="GO:0005829">
    <property type="term" value="C:cytosol"/>
    <property type="evidence" value="ECO:0000250"/>
    <property type="project" value="BHF-UCL"/>
</dbReference>
<dbReference type="GO" id="GO:0030175">
    <property type="term" value="C:filopodium"/>
    <property type="evidence" value="ECO:0007669"/>
    <property type="project" value="UniProtKB-SubCell"/>
</dbReference>
<dbReference type="GO" id="GO:0098978">
    <property type="term" value="C:glutamatergic synapse"/>
    <property type="evidence" value="ECO:0000314"/>
    <property type="project" value="SynGO"/>
</dbReference>
<dbReference type="GO" id="GO:0005739">
    <property type="term" value="C:mitochondrion"/>
    <property type="evidence" value="ECO:0000250"/>
    <property type="project" value="BHF-UCL"/>
</dbReference>
<dbReference type="GO" id="GO:0005634">
    <property type="term" value="C:nucleus"/>
    <property type="evidence" value="ECO:0000250"/>
    <property type="project" value="BHF-UCL"/>
</dbReference>
<dbReference type="GO" id="GO:0048471">
    <property type="term" value="C:perinuclear region of cytoplasm"/>
    <property type="evidence" value="ECO:0000250"/>
    <property type="project" value="BHF-UCL"/>
</dbReference>
<dbReference type="GO" id="GO:0002102">
    <property type="term" value="C:podosome"/>
    <property type="evidence" value="ECO:0007669"/>
    <property type="project" value="UniProtKB-SubCell"/>
</dbReference>
<dbReference type="GO" id="GO:0042383">
    <property type="term" value="C:sarcolemma"/>
    <property type="evidence" value="ECO:0000250"/>
    <property type="project" value="BHF-UCL"/>
</dbReference>
<dbReference type="GO" id="GO:0033017">
    <property type="term" value="C:sarcoplasmic reticulum membrane"/>
    <property type="evidence" value="ECO:0000250"/>
    <property type="project" value="BHF-UCL"/>
</dbReference>
<dbReference type="GO" id="GO:0030315">
    <property type="term" value="C:T-tubule"/>
    <property type="evidence" value="ECO:0007669"/>
    <property type="project" value="Ensembl"/>
</dbReference>
<dbReference type="GO" id="GO:0030018">
    <property type="term" value="C:Z disc"/>
    <property type="evidence" value="ECO:0000250"/>
    <property type="project" value="BHF-UCL"/>
</dbReference>
<dbReference type="GO" id="GO:0050998">
    <property type="term" value="F:nitric-oxide synthase binding"/>
    <property type="evidence" value="ECO:0000250"/>
    <property type="project" value="ARUK-UCL"/>
</dbReference>
<dbReference type="GO" id="GO:0030235">
    <property type="term" value="F:nitric-oxide synthase regulator activity"/>
    <property type="evidence" value="ECO:0000250"/>
    <property type="project" value="BHF-UCL"/>
</dbReference>
<dbReference type="GO" id="GO:0035591">
    <property type="term" value="F:signaling adaptor activity"/>
    <property type="evidence" value="ECO:0000250"/>
    <property type="project" value="UniProtKB"/>
</dbReference>
<dbReference type="GO" id="GO:0006809">
    <property type="term" value="P:nitric oxide biosynthetic process"/>
    <property type="evidence" value="ECO:0000250"/>
    <property type="project" value="BHF-UCL"/>
</dbReference>
<dbReference type="GO" id="GO:1905026">
    <property type="term" value="P:positive regulation of membrane repolarization during ventricular cardiac muscle cell action potential"/>
    <property type="evidence" value="ECO:0000250"/>
    <property type="project" value="BHF-UCL"/>
</dbReference>
<dbReference type="GO" id="GO:1901381">
    <property type="term" value="P:positive regulation of potassium ion transmembrane transport"/>
    <property type="evidence" value="ECO:0000250"/>
    <property type="project" value="BHF-UCL"/>
</dbReference>
<dbReference type="GO" id="GO:0098974">
    <property type="term" value="P:postsynaptic actin cytoskeleton organization"/>
    <property type="evidence" value="ECO:0000314"/>
    <property type="project" value="SynGO"/>
</dbReference>
<dbReference type="GO" id="GO:1902514">
    <property type="term" value="P:regulation of calcium ion transmembrane transport via high voltage-gated calcium channel"/>
    <property type="evidence" value="ECO:0000250"/>
    <property type="project" value="BHF-UCL"/>
</dbReference>
<dbReference type="GO" id="GO:0098901">
    <property type="term" value="P:regulation of cardiac muscle cell action potential"/>
    <property type="evidence" value="ECO:0000250"/>
    <property type="project" value="BHF-UCL"/>
</dbReference>
<dbReference type="GO" id="GO:0003062">
    <property type="term" value="P:regulation of heart rate by chemical signal"/>
    <property type="evidence" value="ECO:0000315"/>
    <property type="project" value="BHF-UCL"/>
</dbReference>
<dbReference type="GO" id="GO:0045428">
    <property type="term" value="P:regulation of nitric oxide biosynthetic process"/>
    <property type="evidence" value="ECO:0000303"/>
    <property type="project" value="DFLAT"/>
</dbReference>
<dbReference type="GO" id="GO:0060307">
    <property type="term" value="P:regulation of ventricular cardiac muscle cell membrane repolarization"/>
    <property type="evidence" value="ECO:0000315"/>
    <property type="project" value="BHF-UCL"/>
</dbReference>
<dbReference type="CDD" id="cd01270">
    <property type="entry name" value="PTB_CAPON-like"/>
    <property type="match status" value="1"/>
</dbReference>
<dbReference type="FunFam" id="2.30.29.30:FF:000124">
    <property type="entry name" value="carboxyl-terminal PDZ ligand of neuronal nitric oxide synthase protein-like"/>
    <property type="match status" value="1"/>
</dbReference>
<dbReference type="Gene3D" id="2.30.29.30">
    <property type="entry name" value="Pleckstrin-homology domain (PH domain)/Phosphotyrosine-binding domain (PTB)"/>
    <property type="match status" value="1"/>
</dbReference>
<dbReference type="InterPro" id="IPR051133">
    <property type="entry name" value="Adapter_Engulfment-Domain"/>
</dbReference>
<dbReference type="InterPro" id="IPR011993">
    <property type="entry name" value="PH-like_dom_sf"/>
</dbReference>
<dbReference type="InterPro" id="IPR006020">
    <property type="entry name" value="PTB/PI_dom"/>
</dbReference>
<dbReference type="PANTHER" id="PTHR11232:SF76">
    <property type="entry name" value="CARBOXYL-TERMINAL PDZ LIGAND OF NEURONAL NITRIC OXIDE SYNTHASE PROTEIN"/>
    <property type="match status" value="1"/>
</dbReference>
<dbReference type="PANTHER" id="PTHR11232">
    <property type="entry name" value="PHOSPHOTYROSINE INTERACTION DOMAIN-CONTAINING FAMILY MEMBER"/>
    <property type="match status" value="1"/>
</dbReference>
<dbReference type="Pfam" id="PF00640">
    <property type="entry name" value="PID"/>
    <property type="match status" value="1"/>
</dbReference>
<dbReference type="SMART" id="SM00462">
    <property type="entry name" value="PTB"/>
    <property type="match status" value="1"/>
</dbReference>
<dbReference type="SUPFAM" id="SSF50729">
    <property type="entry name" value="PH domain-like"/>
    <property type="match status" value="1"/>
</dbReference>
<dbReference type="PROSITE" id="PS01179">
    <property type="entry name" value="PID"/>
    <property type="match status" value="1"/>
</dbReference>
<evidence type="ECO:0000250" key="1"/>
<evidence type="ECO:0000250" key="2">
    <source>
        <dbReference type="UniProtKB" id="O54960"/>
    </source>
</evidence>
<evidence type="ECO:0000250" key="3">
    <source>
        <dbReference type="UniProtKB" id="Q9D3A8"/>
    </source>
</evidence>
<evidence type="ECO:0000255" key="4"/>
<evidence type="ECO:0000255" key="5">
    <source>
        <dbReference type="PROSITE-ProRule" id="PRU00148"/>
    </source>
</evidence>
<evidence type="ECO:0000256" key="6">
    <source>
        <dbReference type="SAM" id="MobiDB-lite"/>
    </source>
</evidence>
<evidence type="ECO:0000269" key="7">
    <source>
    </source>
</evidence>
<evidence type="ECO:0000269" key="8">
    <source>
    </source>
</evidence>
<evidence type="ECO:0000303" key="9">
    <source>
    </source>
</evidence>
<evidence type="ECO:0000303" key="10">
    <source>
    </source>
</evidence>
<evidence type="ECO:0000305" key="11"/>
<evidence type="ECO:0000312" key="12">
    <source>
        <dbReference type="HGNC" id="HGNC:16859"/>
    </source>
</evidence>
<evidence type="ECO:0007744" key="13">
    <source>
    </source>
</evidence>
<evidence type="ECO:0007744" key="14">
    <source>
    </source>
</evidence>